<accession>Q035T6</accession>
<keyword id="KW-1185">Reference proteome</keyword>
<keyword id="KW-0687">Ribonucleoprotein</keyword>
<keyword id="KW-0689">Ribosomal protein</keyword>
<evidence type="ECO:0000255" key="1">
    <source>
        <dbReference type="HAMAP-Rule" id="MF_00294"/>
    </source>
</evidence>
<name>RL332_LACP3</name>
<gene>
    <name evidence="1" type="primary">rpmG2</name>
    <name type="ordered locus">LSEI_2292</name>
</gene>
<organism>
    <name type="scientific">Lacticaseibacillus paracasei (strain ATCC 334 / BCRC 17002 / CCUG 31169 / CIP 107868 / KCTC 3260 / NRRL B-441)</name>
    <name type="common">Lactobacillus paracasei</name>
    <dbReference type="NCBI Taxonomy" id="321967"/>
    <lineage>
        <taxon>Bacteria</taxon>
        <taxon>Bacillati</taxon>
        <taxon>Bacillota</taxon>
        <taxon>Bacilli</taxon>
        <taxon>Lactobacillales</taxon>
        <taxon>Lactobacillaceae</taxon>
        <taxon>Lacticaseibacillus</taxon>
    </lineage>
</organism>
<protein>
    <recommendedName>
        <fullName evidence="1">Large ribosomal subunit protein bL33B</fullName>
    </recommendedName>
    <alternativeName>
        <fullName evidence="1">50S ribosomal protein L33 2</fullName>
    </alternativeName>
</protein>
<feature type="chain" id="PRO_0000356494" description="Large ribosomal subunit protein bL33B">
    <location>
        <begin position="1"/>
        <end position="49"/>
    </location>
</feature>
<proteinExistence type="inferred from homology"/>
<sequence>MTAKKVALACSVCGQRNYFVPENPKRTERLTLKKFCKHCGRVTVHQETK</sequence>
<comment type="similarity">
    <text evidence="1">Belongs to the bacterial ribosomal protein bL33 family.</text>
</comment>
<reference key="1">
    <citation type="journal article" date="2006" name="Proc. Natl. Acad. Sci. U.S.A.">
        <title>Comparative genomics of the lactic acid bacteria.</title>
        <authorList>
            <person name="Makarova K.S."/>
            <person name="Slesarev A."/>
            <person name="Wolf Y.I."/>
            <person name="Sorokin A."/>
            <person name="Mirkin B."/>
            <person name="Koonin E.V."/>
            <person name="Pavlov A."/>
            <person name="Pavlova N."/>
            <person name="Karamychev V."/>
            <person name="Polouchine N."/>
            <person name="Shakhova V."/>
            <person name="Grigoriev I."/>
            <person name="Lou Y."/>
            <person name="Rohksar D."/>
            <person name="Lucas S."/>
            <person name="Huang K."/>
            <person name="Goodstein D.M."/>
            <person name="Hawkins T."/>
            <person name="Plengvidhya V."/>
            <person name="Welker D."/>
            <person name="Hughes J."/>
            <person name="Goh Y."/>
            <person name="Benson A."/>
            <person name="Baldwin K."/>
            <person name="Lee J.-H."/>
            <person name="Diaz-Muniz I."/>
            <person name="Dosti B."/>
            <person name="Smeianov V."/>
            <person name="Wechter W."/>
            <person name="Barabote R."/>
            <person name="Lorca G."/>
            <person name="Altermann E."/>
            <person name="Barrangou R."/>
            <person name="Ganesan B."/>
            <person name="Xie Y."/>
            <person name="Rawsthorne H."/>
            <person name="Tamir D."/>
            <person name="Parker C."/>
            <person name="Breidt F."/>
            <person name="Broadbent J.R."/>
            <person name="Hutkins R."/>
            <person name="O'Sullivan D."/>
            <person name="Steele J."/>
            <person name="Unlu G."/>
            <person name="Saier M.H. Jr."/>
            <person name="Klaenhammer T."/>
            <person name="Richardson P."/>
            <person name="Kozyavkin S."/>
            <person name="Weimer B.C."/>
            <person name="Mills D.A."/>
        </authorList>
    </citation>
    <scope>NUCLEOTIDE SEQUENCE [LARGE SCALE GENOMIC DNA]</scope>
    <source>
        <strain>ATCC 334 / BCRC 17002 / CCUG 31169 / CIP 107868 / KCTC 3260 / NRRL B-441</strain>
    </source>
</reference>
<dbReference type="EMBL" id="CP000423">
    <property type="protein sequence ID" value="ABJ71036.1"/>
    <property type="molecule type" value="Genomic_DNA"/>
</dbReference>
<dbReference type="RefSeq" id="YP_807478.1">
    <property type="nucleotide sequence ID" value="NC_008526.1"/>
</dbReference>
<dbReference type="SMR" id="Q035T6"/>
<dbReference type="STRING" id="321967.LSEI_2292"/>
<dbReference type="PaxDb" id="321967-LSEI_2292"/>
<dbReference type="KEGG" id="lca:LSEI_2292"/>
<dbReference type="PATRIC" id="fig|321967.11.peg.2255"/>
<dbReference type="HOGENOM" id="CLU_190949_0_1_9"/>
<dbReference type="Proteomes" id="UP000001651">
    <property type="component" value="Chromosome"/>
</dbReference>
<dbReference type="GO" id="GO:0005737">
    <property type="term" value="C:cytoplasm"/>
    <property type="evidence" value="ECO:0007669"/>
    <property type="project" value="UniProtKB-ARBA"/>
</dbReference>
<dbReference type="GO" id="GO:1990904">
    <property type="term" value="C:ribonucleoprotein complex"/>
    <property type="evidence" value="ECO:0007669"/>
    <property type="project" value="UniProtKB-KW"/>
</dbReference>
<dbReference type="GO" id="GO:0005840">
    <property type="term" value="C:ribosome"/>
    <property type="evidence" value="ECO:0007669"/>
    <property type="project" value="UniProtKB-KW"/>
</dbReference>
<dbReference type="GO" id="GO:0003735">
    <property type="term" value="F:structural constituent of ribosome"/>
    <property type="evidence" value="ECO:0007669"/>
    <property type="project" value="InterPro"/>
</dbReference>
<dbReference type="GO" id="GO:0006412">
    <property type="term" value="P:translation"/>
    <property type="evidence" value="ECO:0007669"/>
    <property type="project" value="UniProtKB-UniRule"/>
</dbReference>
<dbReference type="Gene3D" id="2.20.28.120">
    <property type="entry name" value="Ribosomal protein L33"/>
    <property type="match status" value="1"/>
</dbReference>
<dbReference type="HAMAP" id="MF_00294">
    <property type="entry name" value="Ribosomal_bL33"/>
    <property type="match status" value="1"/>
</dbReference>
<dbReference type="InterPro" id="IPR001705">
    <property type="entry name" value="Ribosomal_bL33"/>
</dbReference>
<dbReference type="InterPro" id="IPR038584">
    <property type="entry name" value="Ribosomal_bL33_sf"/>
</dbReference>
<dbReference type="InterPro" id="IPR011332">
    <property type="entry name" value="Ribosomal_zn-bd"/>
</dbReference>
<dbReference type="NCBIfam" id="NF001764">
    <property type="entry name" value="PRK00504.1"/>
    <property type="match status" value="1"/>
</dbReference>
<dbReference type="NCBIfam" id="TIGR01023">
    <property type="entry name" value="rpmG_bact"/>
    <property type="match status" value="1"/>
</dbReference>
<dbReference type="Pfam" id="PF00471">
    <property type="entry name" value="Ribosomal_L33"/>
    <property type="match status" value="1"/>
</dbReference>
<dbReference type="SUPFAM" id="SSF57829">
    <property type="entry name" value="Zn-binding ribosomal proteins"/>
    <property type="match status" value="1"/>
</dbReference>